<name>HEMA_CVBOK</name>
<sequence>MFLLPRFVLVSCIIGSLGFDNPPTNVVSHLNGDWFLFGDSRSDCNHVVTTNPRNYSYMDLNPALCGSGKISSKAGNSIFRSFHFTDFYNYTGEGQQIIFYEGVNFTPYHAFKCTTSGSNDIWMQNKGLFYTQVYKNMAVYRSLTFVNVPYVYNGSAQSTALCKSGSLVLNNPAYIAREANFGDYYYKVEADFYLSGCDEYIVPLCIFNGKFLSNTKYYDDSQYYFNKDTGVIYGLNSTETITTGFDFNCHYLVLPSGNYLAISNELLLTVPTKAICLNKRKDFTPVQVVDSRWNNARQSDNMTAVACQPPYCYFRNSTTNYVGVYDINHGDAGFTSILSGLLYDSPCFSQQGVFRYDNVSSVWPLYPYGRCPTAADINTPDVPICVYDPLPIILLGILLSVAVIIIVVLLLYFMVDNGTRLHDA</sequence>
<accession>Q9QAQ9</accession>
<keyword id="KW-1015">Disulfide bond</keyword>
<keyword id="KW-0325">Glycoprotein</keyword>
<keyword id="KW-0348">Hemagglutinin</keyword>
<keyword id="KW-1032">Host cell membrane</keyword>
<keyword id="KW-1043">Host membrane</keyword>
<keyword id="KW-0378">Hydrolase</keyword>
<keyword id="KW-0472">Membrane</keyword>
<keyword id="KW-0732">Signal</keyword>
<keyword id="KW-0812">Transmembrane</keyword>
<keyword id="KW-1133">Transmembrane helix</keyword>
<keyword id="KW-0261">Viral envelope protein</keyword>
<keyword id="KW-0946">Virion</keyword>
<protein>
    <recommendedName>
        <fullName evidence="1">Hemagglutinin-esterase</fullName>
        <shortName evidence="1">HE protein</shortName>
        <ecNumber evidence="1">3.1.1.53</ecNumber>
    </recommendedName>
    <alternativeName>
        <fullName evidence="1">E3 glycoprotein</fullName>
    </alternativeName>
</protein>
<comment type="function">
    <text evidence="1">Structural protein that makes short spikes at the surface of the virus. Contains receptor binding and receptor-destroying activities. Mediates de-O-acetylation of N-acetyl-4-O-acetylneuraminic acid, which is probably the receptor determinant recognized by the virus on the surface of erythrocytes and susceptible cells. This receptor-destroying activity is important for virus release as it probably helps preventing self-aggregation and ensures the efficient spread of the progeny virus from cell to cell. May serve as a secondary viral attachment protein for initiating infection, the spike protein being the major one. May become a target for both the humoral and the cellular branches of the immune system.</text>
</comment>
<comment type="catalytic activity">
    <reaction evidence="1">
        <text>N-acetyl-9-O-acetylneuraminate + H2O = N-acetylneuraminate + acetate + H(+)</text>
        <dbReference type="Rhea" id="RHEA:22600"/>
        <dbReference type="ChEBI" id="CHEBI:15377"/>
        <dbReference type="ChEBI" id="CHEBI:15378"/>
        <dbReference type="ChEBI" id="CHEBI:28999"/>
        <dbReference type="ChEBI" id="CHEBI:30089"/>
        <dbReference type="ChEBI" id="CHEBI:35418"/>
        <dbReference type="EC" id="3.1.1.53"/>
    </reaction>
</comment>
<comment type="catalytic activity">
    <reaction evidence="1">
        <text>N-acetyl-4-O-acetylneuraminate + H2O = N-acetylneuraminate + acetate + H(+)</text>
        <dbReference type="Rhea" id="RHEA:25564"/>
        <dbReference type="ChEBI" id="CHEBI:15377"/>
        <dbReference type="ChEBI" id="CHEBI:15378"/>
        <dbReference type="ChEBI" id="CHEBI:29006"/>
        <dbReference type="ChEBI" id="CHEBI:30089"/>
        <dbReference type="ChEBI" id="CHEBI:35418"/>
        <dbReference type="EC" id="3.1.1.53"/>
    </reaction>
</comment>
<comment type="subunit">
    <text evidence="1">Homodimer; disulfide-linked. Forms a complex with the M protein in the pre-Golgi. Associates then with S-M complex to form a ternary complex S-M-HE.</text>
</comment>
<comment type="subcellular location">
    <subcellularLocation>
        <location evidence="1">Virion membrane</location>
        <topology evidence="1">Single-pass type I membrane protein</topology>
    </subcellularLocation>
    <subcellularLocation>
        <location evidence="1">Host cell membrane</location>
        <topology evidence="1">Single-pass type I membrane protein</topology>
    </subcellularLocation>
    <text evidence="1">In infected cells becomes incorporated into the envelope of virions during virus assembly at the endoplasmic reticulum and cis Golgi. However, some may escape incorporation into virions and subsequently migrate to the cell surface.</text>
</comment>
<comment type="PTM">
    <text evidence="1">N-glycosylated in the host RER.</text>
</comment>
<comment type="similarity">
    <text evidence="1">Belongs to the influenza type C/coronaviruses hemagglutinin-esterase family.</text>
</comment>
<organismHost>
    <name type="scientific">Bos taurus</name>
    <name type="common">Bovine</name>
    <dbReference type="NCBI Taxonomy" id="9913"/>
</organismHost>
<organism>
    <name type="scientific">Bovine coronavirus (strain OK-0514)</name>
    <name type="common">BCoV</name>
    <name type="synonym">BCV</name>
    <dbReference type="NCBI Taxonomy" id="231432"/>
    <lineage>
        <taxon>Viruses</taxon>
        <taxon>Riboviria</taxon>
        <taxon>Orthornavirae</taxon>
        <taxon>Pisuviricota</taxon>
        <taxon>Pisoniviricetes</taxon>
        <taxon>Nidovirales</taxon>
        <taxon>Cornidovirineae</taxon>
        <taxon>Coronaviridae</taxon>
        <taxon>Orthocoronavirinae</taxon>
        <taxon>Betacoronavirus</taxon>
        <taxon>Embecovirus</taxon>
        <taxon>Betacoronavirus 1</taxon>
    </lineage>
</organism>
<reference key="1">
    <citation type="journal article" date="1998" name="Virus Genes">
        <title>Nucleotide and predicted amino acid sequences of all genes encoded by the 3' genomic portion (9.5 kb) of respiratory bovine coronaviruses and comparisons among respiratory and enteric coronaviruses.</title>
        <authorList>
            <person name="Chouljenko V.N."/>
            <person name="Kousoulas K.G."/>
            <person name="Lin X.Q."/>
            <person name="Storz J."/>
        </authorList>
    </citation>
    <scope>NUCLEOTIDE SEQUENCE [GENOMIC RNA]</scope>
    <source>
        <strain>Isolate OK-0514-3</strain>
    </source>
</reference>
<reference key="2">
    <citation type="journal article" date="2001" name="Virus Res.">
        <title>Bovine coronaviruses associated with enteric and respiratory diseases in Canadian dairy cattle display different reactivities to anti-HE monoclonal antibodies and distinct amino acid changes in their HE, S and ns4.9 protein.</title>
        <authorList>
            <person name="Gelinas A.-M."/>
            <person name="Boutin M."/>
            <person name="Sasseville A.M.-J."/>
            <person name="Dea S."/>
        </authorList>
    </citation>
    <scope>NUCLEOTIDE SEQUENCE [GENOMIC RNA]</scope>
</reference>
<gene>
    <name evidence="1" type="primary">HE</name>
    <name type="ORF">2b</name>
</gene>
<proteinExistence type="inferred from homology"/>
<dbReference type="EC" id="3.1.1.53" evidence="1"/>
<dbReference type="EMBL" id="AF058944">
    <property type="protein sequence ID" value="AAF25518.1"/>
    <property type="molecule type" value="Genomic_RNA"/>
</dbReference>
<dbReference type="SMR" id="Q9QAQ9"/>
<dbReference type="GlyCosmos" id="Q9QAQ9">
    <property type="glycosylation" value="8 sites, No reported glycans"/>
</dbReference>
<dbReference type="GO" id="GO:0020002">
    <property type="term" value="C:host cell plasma membrane"/>
    <property type="evidence" value="ECO:0007669"/>
    <property type="project" value="UniProtKB-SubCell"/>
</dbReference>
<dbReference type="GO" id="GO:0016020">
    <property type="term" value="C:membrane"/>
    <property type="evidence" value="ECO:0007669"/>
    <property type="project" value="UniProtKB-UniRule"/>
</dbReference>
<dbReference type="GO" id="GO:0019031">
    <property type="term" value="C:viral envelope"/>
    <property type="evidence" value="ECO:0007669"/>
    <property type="project" value="UniProtKB-UniRule"/>
</dbReference>
<dbReference type="GO" id="GO:0055036">
    <property type="term" value="C:virion membrane"/>
    <property type="evidence" value="ECO:0007669"/>
    <property type="project" value="UniProtKB-SubCell"/>
</dbReference>
<dbReference type="GO" id="GO:0046789">
    <property type="term" value="F:host cell surface receptor binding"/>
    <property type="evidence" value="ECO:0007669"/>
    <property type="project" value="UniProtKB-UniRule"/>
</dbReference>
<dbReference type="GO" id="GO:0106331">
    <property type="term" value="F:sialate 4-O-acetylesterase activity"/>
    <property type="evidence" value="ECO:0007669"/>
    <property type="project" value="RHEA"/>
</dbReference>
<dbReference type="GO" id="GO:0106330">
    <property type="term" value="F:sialate 9-O-acetylesterase activity"/>
    <property type="evidence" value="ECO:0007669"/>
    <property type="project" value="RHEA"/>
</dbReference>
<dbReference type="GO" id="GO:0001681">
    <property type="term" value="F:sialate O-acetylesterase activity"/>
    <property type="evidence" value="ECO:0000250"/>
    <property type="project" value="UniProtKB"/>
</dbReference>
<dbReference type="GO" id="GO:0019064">
    <property type="term" value="P:fusion of virus membrane with host plasma membrane"/>
    <property type="evidence" value="ECO:0007669"/>
    <property type="project" value="UniProtKB-UniRule"/>
</dbReference>
<dbReference type="HAMAP" id="MF_04207">
    <property type="entry name" value="BETA_CORONA_HE"/>
    <property type="match status" value="1"/>
</dbReference>
<dbReference type="InterPro" id="IPR008980">
    <property type="entry name" value="Capsid_hemagglutn"/>
</dbReference>
<dbReference type="InterPro" id="IPR042545">
    <property type="entry name" value="HEMA"/>
</dbReference>
<dbReference type="InterPro" id="IPR007142">
    <property type="entry name" value="Hemagglutn-estrase_core"/>
</dbReference>
<dbReference type="InterPro" id="IPR003860">
    <property type="entry name" value="Hemagglutn-estrase_hemagglutn"/>
</dbReference>
<dbReference type="Pfam" id="PF03996">
    <property type="entry name" value="Hema_esterase"/>
    <property type="match status" value="1"/>
</dbReference>
<dbReference type="Pfam" id="PF02710">
    <property type="entry name" value="Hema_HEFG"/>
    <property type="match status" value="1"/>
</dbReference>
<dbReference type="SUPFAM" id="SSF52266">
    <property type="entry name" value="SGNH hydrolase"/>
    <property type="match status" value="1"/>
</dbReference>
<dbReference type="SUPFAM" id="SSF49818">
    <property type="entry name" value="Viral protein domain"/>
    <property type="match status" value="1"/>
</dbReference>
<evidence type="ECO:0000255" key="1">
    <source>
        <dbReference type="HAMAP-Rule" id="MF_04207"/>
    </source>
</evidence>
<feature type="signal peptide" evidence="1">
    <location>
        <begin position="1"/>
        <end position="16"/>
    </location>
</feature>
<feature type="chain" id="PRO_0000037142" description="Hemagglutinin-esterase" evidence="1">
    <location>
        <begin position="17"/>
        <end position="424"/>
    </location>
</feature>
<feature type="topological domain" description="Virion surface" evidence="1">
    <location>
        <begin position="17"/>
        <end position="392"/>
    </location>
</feature>
<feature type="transmembrane region" description="Helical" evidence="1">
    <location>
        <begin position="393"/>
        <end position="413"/>
    </location>
</feature>
<feature type="topological domain" description="Intravirion" evidence="1">
    <location>
        <begin position="414"/>
        <end position="424"/>
    </location>
</feature>
<feature type="region of interest" description="Esterase domain 1" evidence="1">
    <location>
        <begin position="7"/>
        <end position="127"/>
    </location>
</feature>
<feature type="region of interest" description="Receptor binding" evidence="1">
    <location>
        <begin position="128"/>
        <end position="266"/>
    </location>
</feature>
<feature type="region of interest" description="Esterase domain 2" evidence="1">
    <location>
        <begin position="267"/>
        <end position="379"/>
    </location>
</feature>
<feature type="active site" description="Nucleophile" evidence="1">
    <location>
        <position position="40"/>
    </location>
</feature>
<feature type="active site" description="Charge relay system" evidence="1">
    <location>
        <position position="326"/>
    </location>
</feature>
<feature type="active site" description="Charge relay system" evidence="1">
    <location>
        <position position="329"/>
    </location>
</feature>
<feature type="glycosylation site" description="N-linked (GlcNAc...) asparagine; by host" evidence="1">
    <location>
        <position position="54"/>
    </location>
</feature>
<feature type="glycosylation site" description="N-linked (GlcNAc...) asparagine; by host" evidence="1">
    <location>
        <position position="89"/>
    </location>
</feature>
<feature type="glycosylation site" description="N-linked (GlcNAc...) asparagine; by host" evidence="1">
    <location>
        <position position="153"/>
    </location>
</feature>
<feature type="glycosylation site" description="N-linked (GlcNAc...) asparagine; by host" evidence="1">
    <location>
        <position position="236"/>
    </location>
</feature>
<feature type="glycosylation site" description="N-linked (GlcNAc...) asparagine; by host" evidence="1">
    <location>
        <position position="301"/>
    </location>
</feature>
<feature type="glycosylation site" description="N-linked (GlcNAc...) asparagine; by host" evidence="1">
    <location>
        <position position="316"/>
    </location>
</feature>
<feature type="glycosylation site" description="N-linked (GlcNAc...) asparagine; by host" evidence="1">
    <location>
        <position position="358"/>
    </location>
</feature>
<feature type="glycosylation site" description="N-linked (GlcNAc...) asparagine; by host" evidence="1">
    <location>
        <position position="417"/>
    </location>
</feature>
<feature type="disulfide bond" evidence="1">
    <location>
        <begin position="44"/>
        <end position="65"/>
    </location>
</feature>
<feature type="disulfide bond" evidence="1">
    <location>
        <begin position="113"/>
        <end position="162"/>
    </location>
</feature>
<feature type="disulfide bond" evidence="1">
    <location>
        <begin position="197"/>
        <end position="276"/>
    </location>
</feature>
<feature type="disulfide bond" evidence="1">
    <location>
        <begin position="205"/>
        <end position="249"/>
    </location>
</feature>
<feature type="disulfide bond" evidence="1">
    <location>
        <begin position="307"/>
        <end position="312"/>
    </location>
</feature>
<feature type="disulfide bond" evidence="1">
    <location>
        <begin position="347"/>
        <end position="371"/>
    </location>
</feature>
<feature type="sequence conflict" description="In Ref. 2." ref="2">
    <original>V</original>
    <variation>G</variation>
    <location>
        <position position="139"/>
    </location>
</feature>